<name>RL7A_TETTH</name>
<protein>
    <recommendedName>
        <fullName evidence="2">Large ribosomal subunit protein eL8</fullName>
    </recommendedName>
    <alternativeName>
        <fullName>60S ribosomal protein L7a</fullName>
    </alternativeName>
</protein>
<comment type="similarity">
    <text evidence="2">Belongs to the eukaryotic ribosomal protein eL8 family.</text>
</comment>
<evidence type="ECO:0000256" key="1">
    <source>
        <dbReference type="SAM" id="MobiDB-lite"/>
    </source>
</evidence>
<evidence type="ECO:0000305" key="2"/>
<feature type="chain" id="PRO_0000413494" description="Large ribosomal subunit protein eL8">
    <location>
        <begin position="1"/>
        <end position="255"/>
    </location>
</feature>
<feature type="region of interest" description="Disordered" evidence="1">
    <location>
        <begin position="1"/>
        <end position="28"/>
    </location>
</feature>
<feature type="compositionally biased region" description="Basic residues" evidence="1">
    <location>
        <begin position="1"/>
        <end position="16"/>
    </location>
</feature>
<keyword id="KW-0002">3D-structure</keyword>
<keyword id="KW-0687">Ribonucleoprotein</keyword>
<keyword id="KW-0689">Ribosomal protein</keyword>
<accession>P0DJ14</accession>
<dbReference type="EMBL" id="CN594294">
    <property type="status" value="NOT_ANNOTATED_CDS"/>
    <property type="molecule type" value="mRNA"/>
</dbReference>
<dbReference type="PDB" id="4V8P">
    <property type="method" value="X-ray"/>
    <property type="resolution" value="3.52 A"/>
    <property type="chains" value="BF/CF/EF/GF=1-255"/>
</dbReference>
<dbReference type="PDBsum" id="4V8P"/>
<dbReference type="SMR" id="P0DJ14"/>
<dbReference type="IntAct" id="P0DJ14">
    <property type="interactions" value="1"/>
</dbReference>
<dbReference type="GO" id="GO:1990904">
    <property type="term" value="C:ribonucleoprotein complex"/>
    <property type="evidence" value="ECO:0007669"/>
    <property type="project" value="UniProtKB-KW"/>
</dbReference>
<dbReference type="GO" id="GO:0005840">
    <property type="term" value="C:ribosome"/>
    <property type="evidence" value="ECO:0007669"/>
    <property type="project" value="UniProtKB-KW"/>
</dbReference>
<dbReference type="GO" id="GO:0003723">
    <property type="term" value="F:RNA binding"/>
    <property type="evidence" value="ECO:0007669"/>
    <property type="project" value="InterPro"/>
</dbReference>
<dbReference type="GO" id="GO:0042254">
    <property type="term" value="P:ribosome biogenesis"/>
    <property type="evidence" value="ECO:0007669"/>
    <property type="project" value="InterPro"/>
</dbReference>
<dbReference type="FunFam" id="3.30.1330.30:FF:000003">
    <property type="entry name" value="60S ribosomal protein L7a"/>
    <property type="match status" value="1"/>
</dbReference>
<dbReference type="Gene3D" id="3.30.1330.30">
    <property type="match status" value="1"/>
</dbReference>
<dbReference type="InterPro" id="IPR050257">
    <property type="entry name" value="eL8/uL1-like"/>
</dbReference>
<dbReference type="InterPro" id="IPR029064">
    <property type="entry name" value="Ribosomal_eL30-like_sf"/>
</dbReference>
<dbReference type="InterPro" id="IPR004037">
    <property type="entry name" value="Ribosomal_eL8-like_CS"/>
</dbReference>
<dbReference type="InterPro" id="IPR004038">
    <property type="entry name" value="Ribosomal_eL8/eL30/eS12/Gad45"/>
</dbReference>
<dbReference type="InterPro" id="IPR018492">
    <property type="entry name" value="Ribosomal_eL8/Nhp2"/>
</dbReference>
<dbReference type="InterPro" id="IPR001921">
    <property type="entry name" value="Ribosomal_eL8_euk"/>
</dbReference>
<dbReference type="PANTHER" id="PTHR23105">
    <property type="entry name" value="RIBOSOMAL PROTEIN L7AE FAMILY MEMBER"/>
    <property type="match status" value="1"/>
</dbReference>
<dbReference type="Pfam" id="PF01248">
    <property type="entry name" value="Ribosomal_L7Ae"/>
    <property type="match status" value="1"/>
</dbReference>
<dbReference type="PRINTS" id="PR00881">
    <property type="entry name" value="L7ARS6FAMILY"/>
</dbReference>
<dbReference type="PRINTS" id="PR00882">
    <property type="entry name" value="RIBOSOMALL7A"/>
</dbReference>
<dbReference type="SUPFAM" id="SSF55315">
    <property type="entry name" value="L30e-like"/>
    <property type="match status" value="1"/>
</dbReference>
<dbReference type="PROSITE" id="PS01082">
    <property type="entry name" value="RIBOSOMAL_L7AE"/>
    <property type="match status" value="1"/>
</dbReference>
<gene>
    <name type="primary">RPL7A</name>
    <name type="synonym">RPL8</name>
</gene>
<organism>
    <name type="scientific">Tetrahymena thermophila</name>
    <dbReference type="NCBI Taxonomy" id="5911"/>
    <lineage>
        <taxon>Eukaryota</taxon>
        <taxon>Sar</taxon>
        <taxon>Alveolata</taxon>
        <taxon>Ciliophora</taxon>
        <taxon>Intramacronucleata</taxon>
        <taxon>Oligohymenophorea</taxon>
        <taxon>Hymenostomatida</taxon>
        <taxon>Tetrahymenina</taxon>
        <taxon>Tetrahymenidae</taxon>
        <taxon>Tetrahymena</taxon>
    </lineage>
</organism>
<reference key="1">
    <citation type="submission" date="2006-05" db="EMBL/GenBank/DDBJ databases">
        <title>PEPdbPub Tetrahymena thermophila (TIGR).</title>
        <authorList>
            <person name="Garg J."/>
            <person name="Pearlman R.E."/>
            <person name="Carlton J."/>
        </authorList>
    </citation>
    <scope>NUCLEOTIDE SEQUENCE [LARGE SCALE MRNA]</scope>
</reference>
<reference key="2">
    <citation type="journal article" date="2011" name="Science">
        <title>Crystal structure of the eukaryotic 60S ribosomal subunit in complex with initiation factor 6.</title>
        <authorList>
            <person name="Klinge S."/>
            <person name="Voigts-Hoffmann F."/>
            <person name="Leibundgut M."/>
            <person name="Arpagaus S."/>
            <person name="Ban N."/>
        </authorList>
    </citation>
    <scope>X-RAY CRYSTALLOGRAPHY (3.52 ANGSTROMS) OF 60S RIBOSOME</scope>
</reference>
<proteinExistence type="evidence at protein level"/>
<sequence>MPKAPKKITKPKKAEKKKNPLFQAKPRSFRVGGDIQPKRDLTRFVRWPRYITLQRQKRVLLQRLKVPPQIHQFTKTLDKNQSSNLFKLLASYAPEKPAEKKQRLVAQAEAKKDGKQVETKKPIVLKYGLNHITTLIENKQAKLVVIAHDVDPIELVIFLPQLCRKNDVPFAFVKGKAALGKLVNKKTATAVALTEVRNEDKAKLQQFSELFKTNYNANDELRKTWGGGILGQKSQHKVEALAKAVQEEQIKKAKL</sequence>